<protein>
    <recommendedName>
        <fullName evidence="2">Bifunctional protein PyrR</fullName>
    </recommendedName>
    <domain>
        <recommendedName>
            <fullName evidence="2">Pyrimidine operon regulatory protein</fullName>
        </recommendedName>
    </domain>
    <domain>
        <recommendedName>
            <fullName evidence="2">Uracil phosphoribosyltransferase</fullName>
            <shortName evidence="2">UPRTase</shortName>
            <ecNumber evidence="2">2.4.2.9</ecNumber>
        </recommendedName>
    </domain>
</protein>
<sequence length="183" mass="20539">MQKQVVVMDEAAIKRALTRVSYEIIERNKGTKNLALVGIKTRGIYLAERLHKRILEIEGIDVPVGDIDITLYRDDLSFKDDKTREPAVHGTNIPFDINGKKVVLVDDVLYTGRTVRAAMDALMDVGRPAQIHLAVLADRGHRELPIRADYVGKNIPTSGNERVEVRLTDVDNEEDAVIINKNE</sequence>
<comment type="function">
    <text evidence="2">Regulates transcriptional attenuation of the pyrimidine nucleotide (pyr) operon by binding in a uridine-dependent manner to specific sites on pyr mRNA. This disrupts an antiterminator hairpin in the RNA and favors formation of a downstream transcription terminator, leading to a reduced expression of downstream genes.</text>
</comment>
<comment type="function">
    <text evidence="2">Also displays a weak uracil phosphoribosyltransferase activity which is not physiologically significant.</text>
</comment>
<comment type="catalytic activity">
    <reaction evidence="2">
        <text>UMP + diphosphate = 5-phospho-alpha-D-ribose 1-diphosphate + uracil</text>
        <dbReference type="Rhea" id="RHEA:13017"/>
        <dbReference type="ChEBI" id="CHEBI:17568"/>
        <dbReference type="ChEBI" id="CHEBI:33019"/>
        <dbReference type="ChEBI" id="CHEBI:57865"/>
        <dbReference type="ChEBI" id="CHEBI:58017"/>
        <dbReference type="EC" id="2.4.2.9"/>
    </reaction>
</comment>
<comment type="subunit">
    <text evidence="2">Homodimer and homohexamer; in equilibrium.</text>
</comment>
<comment type="similarity">
    <text evidence="2">Belongs to the purine/pyrimidine phosphoribosyltransferase family. PyrR subfamily.</text>
</comment>
<name>PYRR_LISMF</name>
<accession>Q71YH6</accession>
<proteinExistence type="inferred from homology"/>
<feature type="chain" id="PRO_0000183044" description="Bifunctional protein PyrR">
    <location>
        <begin position="1"/>
        <end position="183"/>
    </location>
</feature>
<feature type="short sequence motif" description="PRPP-binding" evidence="2">
    <location>
        <begin position="102"/>
        <end position="114"/>
    </location>
</feature>
<feature type="binding site" evidence="1">
    <location>
        <begin position="41"/>
        <end position="42"/>
    </location>
    <ligand>
        <name>substrate</name>
    </ligand>
</feature>
<feature type="binding site" evidence="1">
    <location>
        <begin position="106"/>
        <end position="114"/>
    </location>
    <ligand>
        <name>substrate</name>
    </ligand>
</feature>
<feature type="binding site" evidence="1">
    <location>
        <position position="139"/>
    </location>
    <ligand>
        <name>substrate</name>
    </ligand>
</feature>
<feature type="binding site" evidence="1">
    <location>
        <position position="163"/>
    </location>
    <ligand>
        <name>substrate</name>
    </ligand>
</feature>
<dbReference type="EC" id="2.4.2.9" evidence="2"/>
<dbReference type="EMBL" id="AE017262">
    <property type="protein sequence ID" value="AAT04638.1"/>
    <property type="molecule type" value="Genomic_DNA"/>
</dbReference>
<dbReference type="RefSeq" id="WP_003726598.1">
    <property type="nucleotide sequence ID" value="NC_002973.6"/>
</dbReference>
<dbReference type="SMR" id="Q71YH6"/>
<dbReference type="KEGG" id="lmf:LMOf2365_1868"/>
<dbReference type="HOGENOM" id="CLU_094234_2_1_9"/>
<dbReference type="GO" id="GO:0003723">
    <property type="term" value="F:RNA binding"/>
    <property type="evidence" value="ECO:0007669"/>
    <property type="project" value="UniProtKB-UniRule"/>
</dbReference>
<dbReference type="GO" id="GO:0004845">
    <property type="term" value="F:uracil phosphoribosyltransferase activity"/>
    <property type="evidence" value="ECO:0007669"/>
    <property type="project" value="UniProtKB-UniRule"/>
</dbReference>
<dbReference type="GO" id="GO:0006353">
    <property type="term" value="P:DNA-templated transcription termination"/>
    <property type="evidence" value="ECO:0007669"/>
    <property type="project" value="UniProtKB-UniRule"/>
</dbReference>
<dbReference type="CDD" id="cd06223">
    <property type="entry name" value="PRTases_typeI"/>
    <property type="match status" value="1"/>
</dbReference>
<dbReference type="FunFam" id="3.40.50.2020:FF:000020">
    <property type="entry name" value="Bifunctional protein PyrR"/>
    <property type="match status" value="1"/>
</dbReference>
<dbReference type="Gene3D" id="3.40.50.2020">
    <property type="match status" value="1"/>
</dbReference>
<dbReference type="HAMAP" id="MF_01219">
    <property type="entry name" value="PyrR"/>
    <property type="match status" value="1"/>
</dbReference>
<dbReference type="InterPro" id="IPR000836">
    <property type="entry name" value="PRibTrfase_dom"/>
</dbReference>
<dbReference type="InterPro" id="IPR029057">
    <property type="entry name" value="PRTase-like"/>
</dbReference>
<dbReference type="InterPro" id="IPR023050">
    <property type="entry name" value="PyrR"/>
</dbReference>
<dbReference type="InterPro" id="IPR050137">
    <property type="entry name" value="PyrR_bifunctional"/>
</dbReference>
<dbReference type="NCBIfam" id="NF003545">
    <property type="entry name" value="PRK05205.1-1"/>
    <property type="match status" value="1"/>
</dbReference>
<dbReference type="NCBIfam" id="NF003548">
    <property type="entry name" value="PRK05205.1-4"/>
    <property type="match status" value="1"/>
</dbReference>
<dbReference type="NCBIfam" id="NF003549">
    <property type="entry name" value="PRK05205.1-5"/>
    <property type="match status" value="1"/>
</dbReference>
<dbReference type="PANTHER" id="PTHR11608">
    <property type="entry name" value="BIFUNCTIONAL PROTEIN PYRR"/>
    <property type="match status" value="1"/>
</dbReference>
<dbReference type="PANTHER" id="PTHR11608:SF0">
    <property type="entry name" value="BIFUNCTIONAL PROTEIN PYRR"/>
    <property type="match status" value="1"/>
</dbReference>
<dbReference type="Pfam" id="PF00156">
    <property type="entry name" value="Pribosyltran"/>
    <property type="match status" value="1"/>
</dbReference>
<dbReference type="SUPFAM" id="SSF53271">
    <property type="entry name" value="PRTase-like"/>
    <property type="match status" value="1"/>
</dbReference>
<gene>
    <name evidence="2" type="primary">pyrR</name>
    <name type="ordered locus">LMOf2365_1868</name>
</gene>
<evidence type="ECO:0000250" key="1"/>
<evidence type="ECO:0000255" key="2">
    <source>
        <dbReference type="HAMAP-Rule" id="MF_01219"/>
    </source>
</evidence>
<organism>
    <name type="scientific">Listeria monocytogenes serotype 4b (strain F2365)</name>
    <dbReference type="NCBI Taxonomy" id="265669"/>
    <lineage>
        <taxon>Bacteria</taxon>
        <taxon>Bacillati</taxon>
        <taxon>Bacillota</taxon>
        <taxon>Bacilli</taxon>
        <taxon>Bacillales</taxon>
        <taxon>Listeriaceae</taxon>
        <taxon>Listeria</taxon>
    </lineage>
</organism>
<reference key="1">
    <citation type="journal article" date="2004" name="Nucleic Acids Res.">
        <title>Whole genome comparisons of serotype 4b and 1/2a strains of the food-borne pathogen Listeria monocytogenes reveal new insights into the core genome components of this species.</title>
        <authorList>
            <person name="Nelson K.E."/>
            <person name="Fouts D.E."/>
            <person name="Mongodin E.F."/>
            <person name="Ravel J."/>
            <person name="DeBoy R.T."/>
            <person name="Kolonay J.F."/>
            <person name="Rasko D.A."/>
            <person name="Angiuoli S.V."/>
            <person name="Gill S.R."/>
            <person name="Paulsen I.T."/>
            <person name="Peterson J.D."/>
            <person name="White O."/>
            <person name="Nelson W.C."/>
            <person name="Nierman W.C."/>
            <person name="Beanan M.J."/>
            <person name="Brinkac L.M."/>
            <person name="Daugherty S.C."/>
            <person name="Dodson R.J."/>
            <person name="Durkin A.S."/>
            <person name="Madupu R."/>
            <person name="Haft D.H."/>
            <person name="Selengut J."/>
            <person name="Van Aken S.E."/>
            <person name="Khouri H.M."/>
            <person name="Fedorova N."/>
            <person name="Forberger H.A."/>
            <person name="Tran B."/>
            <person name="Kathariou S."/>
            <person name="Wonderling L.D."/>
            <person name="Uhlich G.A."/>
            <person name="Bayles D.O."/>
            <person name="Luchansky J.B."/>
            <person name="Fraser C.M."/>
        </authorList>
    </citation>
    <scope>NUCLEOTIDE SEQUENCE [LARGE SCALE GENOMIC DNA]</scope>
    <source>
        <strain>F2365</strain>
    </source>
</reference>
<keyword id="KW-0328">Glycosyltransferase</keyword>
<keyword id="KW-0694">RNA-binding</keyword>
<keyword id="KW-0804">Transcription</keyword>
<keyword id="KW-0805">Transcription regulation</keyword>
<keyword id="KW-0806">Transcription termination</keyword>
<keyword id="KW-0808">Transferase</keyword>